<protein>
    <recommendedName>
        <fullName evidence="1">Trans-aconitate 2-methyltransferase</fullName>
        <ecNumber evidence="1">2.1.1.144</ecNumber>
    </recommendedName>
</protein>
<evidence type="ECO:0000255" key="1">
    <source>
        <dbReference type="HAMAP-Rule" id="MF_00560"/>
    </source>
</evidence>
<keyword id="KW-0963">Cytoplasm</keyword>
<keyword id="KW-0489">Methyltransferase</keyword>
<keyword id="KW-1185">Reference proteome</keyword>
<keyword id="KW-0949">S-adenosyl-L-methionine</keyword>
<keyword id="KW-0808">Transferase</keyword>
<reference key="1">
    <citation type="journal article" date="2008" name="Genome Res.">
        <title>Insights from the complete genome sequence of Mycobacterium marinum on the evolution of Mycobacterium tuberculosis.</title>
        <authorList>
            <person name="Stinear T.P."/>
            <person name="Seemann T."/>
            <person name="Harrison P.F."/>
            <person name="Jenkin G.A."/>
            <person name="Davies J.K."/>
            <person name="Johnson P.D."/>
            <person name="Abdellah Z."/>
            <person name="Arrowsmith C."/>
            <person name="Chillingworth T."/>
            <person name="Churcher C."/>
            <person name="Clarke K."/>
            <person name="Cronin A."/>
            <person name="Davis P."/>
            <person name="Goodhead I."/>
            <person name="Holroyd N."/>
            <person name="Jagels K."/>
            <person name="Lord A."/>
            <person name="Moule S."/>
            <person name="Mungall K."/>
            <person name="Norbertczak H."/>
            <person name="Quail M.A."/>
            <person name="Rabbinowitsch E."/>
            <person name="Walker D."/>
            <person name="White B."/>
            <person name="Whitehead S."/>
            <person name="Small P.L."/>
            <person name="Brosch R."/>
            <person name="Ramakrishnan L."/>
            <person name="Fischbach M.A."/>
            <person name="Parkhill J."/>
            <person name="Cole S.T."/>
        </authorList>
    </citation>
    <scope>NUCLEOTIDE SEQUENCE [LARGE SCALE GENOMIC DNA]</scope>
    <source>
        <strain>ATCC BAA-535 / M</strain>
    </source>
</reference>
<name>TAM_MYCMM</name>
<sequence>MWDPDVYLAFADHRGRPFYDLVSRIGAKRARRVVDLGCGPGNLTRYLARRWPEAIIEAWDSSPQMVAAARERGIDATTGDLRTWKPKPDTDVVISSAALHWVPEHADLMVQWATELPHGSWIAVQVPGNFETPSHAVVRALARREPYAKLMRDIPFRVGAVVGSPASYAGLLMDAGCKVDAWETTYLHQLTGKNPVLEWITGTALVPVRERLDDVSWEQFRQELIPLLDDAYPPRSDGTTMFPFRRLFIVAEVGGARRSADVS</sequence>
<gene>
    <name evidence="1" type="primary">tam</name>
    <name type="ordered locus">MMAR_0553</name>
</gene>
<comment type="function">
    <text evidence="1">Catalyzes the S-adenosylmethionine monomethyl esterification of trans-aconitate.</text>
</comment>
<comment type="catalytic activity">
    <reaction evidence="1">
        <text>trans-aconitate + S-adenosyl-L-methionine = (E)-3-(methoxycarbonyl)pent-2-enedioate + S-adenosyl-L-homocysteine</text>
        <dbReference type="Rhea" id="RHEA:14969"/>
        <dbReference type="ChEBI" id="CHEBI:15708"/>
        <dbReference type="ChEBI" id="CHEBI:57470"/>
        <dbReference type="ChEBI" id="CHEBI:57856"/>
        <dbReference type="ChEBI" id="CHEBI:59789"/>
        <dbReference type="EC" id="2.1.1.144"/>
    </reaction>
</comment>
<comment type="subcellular location">
    <subcellularLocation>
        <location evidence="1">Cytoplasm</location>
    </subcellularLocation>
</comment>
<comment type="similarity">
    <text evidence="1">Belongs to the methyltransferase superfamily. Tam family.</text>
</comment>
<dbReference type="EC" id="2.1.1.144" evidence="1"/>
<dbReference type="EMBL" id="CP000854">
    <property type="protein sequence ID" value="ACC39017.1"/>
    <property type="molecule type" value="Genomic_DNA"/>
</dbReference>
<dbReference type="RefSeq" id="WP_012392518.1">
    <property type="nucleotide sequence ID" value="NC_010612.1"/>
</dbReference>
<dbReference type="SMR" id="B2HNX5"/>
<dbReference type="STRING" id="216594.MMAR_0553"/>
<dbReference type="KEGG" id="mmi:MMAR_0553"/>
<dbReference type="eggNOG" id="COG4106">
    <property type="taxonomic scope" value="Bacteria"/>
</dbReference>
<dbReference type="HOGENOM" id="CLU_037990_5_2_11"/>
<dbReference type="OrthoDB" id="9795085at2"/>
<dbReference type="Proteomes" id="UP000001190">
    <property type="component" value="Chromosome"/>
</dbReference>
<dbReference type="GO" id="GO:0005737">
    <property type="term" value="C:cytoplasm"/>
    <property type="evidence" value="ECO:0007669"/>
    <property type="project" value="UniProtKB-SubCell"/>
</dbReference>
<dbReference type="GO" id="GO:0030798">
    <property type="term" value="F:trans-aconitate 2-methyltransferase activity"/>
    <property type="evidence" value="ECO:0007669"/>
    <property type="project" value="UniProtKB-UniRule"/>
</dbReference>
<dbReference type="GO" id="GO:0032259">
    <property type="term" value="P:methylation"/>
    <property type="evidence" value="ECO:0007669"/>
    <property type="project" value="UniProtKB-KW"/>
</dbReference>
<dbReference type="CDD" id="cd02440">
    <property type="entry name" value="AdoMet_MTases"/>
    <property type="match status" value="1"/>
</dbReference>
<dbReference type="Gene3D" id="1.10.150.290">
    <property type="entry name" value="S-adenosyl-L-methionine-dependent methyltransferases"/>
    <property type="match status" value="1"/>
</dbReference>
<dbReference type="Gene3D" id="3.40.50.150">
    <property type="entry name" value="Vaccinia Virus protein VP39"/>
    <property type="match status" value="1"/>
</dbReference>
<dbReference type="HAMAP" id="MF_00560">
    <property type="entry name" value="Tran_acon_Me_trans"/>
    <property type="match status" value="1"/>
</dbReference>
<dbReference type="InterPro" id="IPR041698">
    <property type="entry name" value="Methyltransf_25"/>
</dbReference>
<dbReference type="InterPro" id="IPR029063">
    <property type="entry name" value="SAM-dependent_MTases_sf"/>
</dbReference>
<dbReference type="InterPro" id="IPR023506">
    <property type="entry name" value="Trans-aconitate_MeTrfase"/>
</dbReference>
<dbReference type="InterPro" id="IPR023149">
    <property type="entry name" value="Trans_acon_MeTrfase_C"/>
</dbReference>
<dbReference type="NCBIfam" id="NF010703">
    <property type="entry name" value="PRK14103.1"/>
    <property type="match status" value="1"/>
</dbReference>
<dbReference type="PANTHER" id="PTHR43861:SF1">
    <property type="entry name" value="TRANS-ACONITATE 2-METHYLTRANSFERASE"/>
    <property type="match status" value="1"/>
</dbReference>
<dbReference type="PANTHER" id="PTHR43861">
    <property type="entry name" value="TRANS-ACONITATE 2-METHYLTRANSFERASE-RELATED"/>
    <property type="match status" value="1"/>
</dbReference>
<dbReference type="Pfam" id="PF13649">
    <property type="entry name" value="Methyltransf_25"/>
    <property type="match status" value="1"/>
</dbReference>
<dbReference type="SUPFAM" id="SSF53335">
    <property type="entry name" value="S-adenosyl-L-methionine-dependent methyltransferases"/>
    <property type="match status" value="1"/>
</dbReference>
<proteinExistence type="inferred from homology"/>
<organism>
    <name type="scientific">Mycobacterium marinum (strain ATCC BAA-535 / M)</name>
    <dbReference type="NCBI Taxonomy" id="216594"/>
    <lineage>
        <taxon>Bacteria</taxon>
        <taxon>Bacillati</taxon>
        <taxon>Actinomycetota</taxon>
        <taxon>Actinomycetes</taxon>
        <taxon>Mycobacteriales</taxon>
        <taxon>Mycobacteriaceae</taxon>
        <taxon>Mycobacterium</taxon>
        <taxon>Mycobacterium ulcerans group</taxon>
    </lineage>
</organism>
<feature type="chain" id="PRO_1000129262" description="Trans-aconitate 2-methyltransferase">
    <location>
        <begin position="1"/>
        <end position="263"/>
    </location>
</feature>
<accession>B2HNX5</accession>